<comment type="function">
    <text evidence="2">Trypsin-like serine protease that plays an essential role in regulating the immune response by controlling all complement pathways. Inhibits these pathways by cleaving three peptide bonds in the alpha-chain of C3b and two bonds in the alpha-chain of C4b thereby inactivating these proteins. Essential cofactors for these reactions include factor H and C4BP in the fluid phase and membrane cofactor protein/CD46 and CR1 on cell surfaces. The presence of these cofactors on healthy cells allows degradation of deposited C3b by CFI in order to prevent undesired complement activation, while in apoptotic cells or microbes, the absence of such cofactors leads to C3b-mediated complement activation and subsequent opsonization.</text>
</comment>
<comment type="catalytic activity">
    <reaction>
        <text>Inactivates complement subcomponents C3b, iC3b and C4b by proteolytic cleavage.</text>
        <dbReference type="EC" id="3.4.21.45"/>
    </reaction>
</comment>
<comment type="subunit">
    <text evidence="2">Heterodimer of a light and heavy chains; disulfide-linked. The fully processed and mature protein circulates as a zymogen, and is allosterically activated by substrate-induced remodeling of the active site. Interacts with C3b. Interacts with complement factor H.</text>
</comment>
<comment type="subcellular location">
    <subcellularLocation>
        <location evidence="2">Secreted</location>
        <location evidence="2">Extracellular space</location>
    </subcellularLocation>
</comment>
<comment type="tissue specificity">
    <text evidence="2">Expressed in the liver by hepatocytes. Also present in other cells such as monocytes, fibroblasts or keratinocytes.</text>
</comment>
<comment type="similarity">
    <text evidence="6">Belongs to the peptidase S1 family.</text>
</comment>
<name>CFAI_RAT</name>
<evidence type="ECO:0000250" key="1">
    <source>
        <dbReference type="UniProtKB" id="P00750"/>
    </source>
</evidence>
<evidence type="ECO:0000250" key="2">
    <source>
        <dbReference type="UniProtKB" id="P05156"/>
    </source>
</evidence>
<evidence type="ECO:0000255" key="3"/>
<evidence type="ECO:0000255" key="4">
    <source>
        <dbReference type="PROSITE-ProRule" id="PRU00124"/>
    </source>
</evidence>
<evidence type="ECO:0000255" key="5">
    <source>
        <dbReference type="PROSITE-ProRule" id="PRU00196"/>
    </source>
</evidence>
<evidence type="ECO:0000255" key="6">
    <source>
        <dbReference type="PROSITE-ProRule" id="PRU00274"/>
    </source>
</evidence>
<evidence type="ECO:0000255" key="7">
    <source>
        <dbReference type="PROSITE-ProRule" id="PRU00798"/>
    </source>
</evidence>
<keyword id="KW-0106">Calcium</keyword>
<keyword id="KW-0165">Cleavage on pair of basic residues</keyword>
<keyword id="KW-0180">Complement pathway</keyword>
<keyword id="KW-1015">Disulfide bond</keyword>
<keyword id="KW-0325">Glycoprotein</keyword>
<keyword id="KW-0378">Hydrolase</keyword>
<keyword id="KW-0391">Immunity</keyword>
<keyword id="KW-0399">Innate immunity</keyword>
<keyword id="KW-0479">Metal-binding</keyword>
<keyword id="KW-0645">Protease</keyword>
<keyword id="KW-1185">Reference proteome</keyword>
<keyword id="KW-0677">Repeat</keyword>
<keyword id="KW-0964">Secreted</keyword>
<keyword id="KW-0720">Serine protease</keyword>
<keyword id="KW-0732">Signal</keyword>
<feature type="signal peptide" evidence="3">
    <location>
        <begin position="1"/>
        <end position="18"/>
    </location>
</feature>
<feature type="chain" id="PRO_0000027574" description="Complement factor I">
    <location>
        <begin position="19"/>
        <end position="604"/>
    </location>
</feature>
<feature type="chain" id="PRO_0000027575" description="Complement factor I heavy chain">
    <location>
        <begin position="19"/>
        <end position="357"/>
    </location>
</feature>
<feature type="chain" id="PRO_0000027576" description="Complement factor I light chain">
    <location>
        <begin position="362"/>
        <end position="604"/>
    </location>
</feature>
<feature type="domain" description="Kazal-like" evidence="7">
    <location>
        <begin position="58"/>
        <end position="111"/>
    </location>
</feature>
<feature type="domain" description="SRCR" evidence="5">
    <location>
        <begin position="117"/>
        <end position="217"/>
    </location>
</feature>
<feature type="domain" description="LDL-receptor class A 1" evidence="4">
    <location>
        <begin position="218"/>
        <end position="262"/>
    </location>
</feature>
<feature type="domain" description="LDL-receptor class A 2" evidence="4">
    <location>
        <begin position="263"/>
        <end position="299"/>
    </location>
</feature>
<feature type="domain" description="Peptidase S1" evidence="6">
    <location>
        <begin position="362"/>
        <end position="595"/>
    </location>
</feature>
<feature type="active site" description="Charge relay system" evidence="1">
    <location>
        <position position="402"/>
    </location>
</feature>
<feature type="active site" description="Charge relay system" evidence="1">
    <location>
        <position position="450"/>
    </location>
</feature>
<feature type="active site" description="Charge relay system" evidence="1">
    <location>
        <position position="546"/>
    </location>
</feature>
<feature type="binding site" evidence="2">
    <location>
        <position position="244"/>
    </location>
    <ligand>
        <name>Ca(2+)</name>
        <dbReference type="ChEBI" id="CHEBI:29108"/>
        <label>1</label>
    </ligand>
</feature>
<feature type="binding site" evidence="2">
    <location>
        <position position="247"/>
    </location>
    <ligand>
        <name>Ca(2+)</name>
        <dbReference type="ChEBI" id="CHEBI:29108"/>
        <label>1</label>
    </ligand>
</feature>
<feature type="binding site" evidence="2">
    <location>
        <position position="249"/>
    </location>
    <ligand>
        <name>Ca(2+)</name>
        <dbReference type="ChEBI" id="CHEBI:29108"/>
        <label>1</label>
    </ligand>
</feature>
<feature type="binding site" evidence="2">
    <location>
        <position position="251"/>
    </location>
    <ligand>
        <name>Ca(2+)</name>
        <dbReference type="ChEBI" id="CHEBI:29108"/>
        <label>1</label>
    </ligand>
</feature>
<feature type="binding site" evidence="2">
    <location>
        <position position="257"/>
    </location>
    <ligand>
        <name>Ca(2+)</name>
        <dbReference type="ChEBI" id="CHEBI:29108"/>
        <label>1</label>
    </ligand>
</feature>
<feature type="binding site" evidence="2">
    <location>
        <position position="258"/>
    </location>
    <ligand>
        <name>Ca(2+)</name>
        <dbReference type="ChEBI" id="CHEBI:29108"/>
        <label>1</label>
    </ligand>
</feature>
<feature type="binding site" evidence="2">
    <location>
        <position position="284"/>
    </location>
    <ligand>
        <name>Ca(2+)</name>
        <dbReference type="ChEBI" id="CHEBI:29108"/>
        <label>2</label>
    </ligand>
</feature>
<feature type="binding site" evidence="2">
    <location>
        <position position="286"/>
    </location>
    <ligand>
        <name>Ca(2+)</name>
        <dbReference type="ChEBI" id="CHEBI:29108"/>
        <label>2</label>
    </ligand>
</feature>
<feature type="binding site" evidence="2">
    <location>
        <position position="288"/>
    </location>
    <ligand>
        <name>Ca(2+)</name>
        <dbReference type="ChEBI" id="CHEBI:29108"/>
        <label>2</label>
    </ligand>
</feature>
<feature type="binding site" evidence="2">
    <location>
        <position position="294"/>
    </location>
    <ligand>
        <name>Ca(2+)</name>
        <dbReference type="ChEBI" id="CHEBI:29108"/>
        <label>2</label>
    </ligand>
</feature>
<feature type="binding site" evidence="2">
    <location>
        <position position="295"/>
    </location>
    <ligand>
        <name>Ca(2+)</name>
        <dbReference type="ChEBI" id="CHEBI:29108"/>
        <label>2</label>
    </ligand>
</feature>
<feature type="glycosylation site" description="N-linked (GlcNAc...) asparagine" evidence="3">
    <location>
        <position position="40"/>
    </location>
</feature>
<feature type="glycosylation site" description="N-linked (GlcNAc...) asparagine" evidence="3">
    <location>
        <position position="106"/>
    </location>
</feature>
<feature type="glycosylation site" description="N-linked (GlcNAc...) asparagine" evidence="3">
    <location>
        <position position="116"/>
    </location>
</feature>
<feature type="glycosylation site" description="N-linked (GlcNAc...) asparagine" evidence="3">
    <location>
        <position position="182"/>
    </location>
</feature>
<feature type="glycosylation site" description="N-linked (GlcNAc...) asparagine" evidence="3">
    <location>
        <position position="515"/>
    </location>
</feature>
<feature type="glycosylation site" description="N-linked (GlcNAc...) asparagine" evidence="3">
    <location>
        <position position="557"/>
    </location>
</feature>
<feature type="disulfide bond" evidence="2">
    <location>
        <begin position="36"/>
        <end position="260"/>
    </location>
</feature>
<feature type="disulfide bond" evidence="2">
    <location>
        <begin position="46"/>
        <end position="57"/>
    </location>
</feature>
<feature type="disulfide bond" evidence="2">
    <location>
        <begin position="51"/>
        <end position="62"/>
    </location>
</feature>
<feature type="disulfide bond" evidence="2">
    <location>
        <begin position="64"/>
        <end position="96"/>
    </location>
</feature>
<feature type="disulfide bond" evidence="2">
    <location>
        <begin position="70"/>
        <end position="89"/>
    </location>
</feature>
<feature type="disulfide bond" evidence="2">
    <location>
        <begin position="78"/>
        <end position="109"/>
    </location>
</feature>
<feature type="disulfide bond" evidence="2">
    <location>
        <begin position="144"/>
        <end position="186"/>
    </location>
</feature>
<feature type="disulfide bond" evidence="2">
    <location>
        <begin position="157"/>
        <end position="219"/>
    </location>
</feature>
<feature type="disulfide bond" evidence="2">
    <location>
        <begin position="191"/>
        <end position="201"/>
    </location>
</feature>
<feature type="disulfide bond" evidence="2">
    <location>
        <begin position="234"/>
        <end position="252"/>
    </location>
</feature>
<feature type="disulfide bond" evidence="2">
    <location>
        <begin position="246"/>
        <end position="261"/>
    </location>
</feature>
<feature type="disulfide bond" evidence="2">
    <location>
        <begin position="264"/>
        <end position="276"/>
    </location>
</feature>
<feature type="disulfide bond" evidence="2">
    <location>
        <begin position="271"/>
        <end position="289"/>
    </location>
</feature>
<feature type="disulfide bond" evidence="2">
    <location>
        <begin position="283"/>
        <end position="298"/>
    </location>
</feature>
<feature type="disulfide bond" description="Interchain (between heavy and light chains)" evidence="4 5 6 7">
    <location>
        <begin position="349"/>
        <end position="474"/>
    </location>
</feature>
<feature type="disulfide bond" evidence="2">
    <location>
        <begin position="387"/>
        <end position="403"/>
    </location>
</feature>
<feature type="disulfide bond" evidence="2">
    <location>
        <begin position="395"/>
        <end position="465"/>
    </location>
</feature>
<feature type="disulfide bond" description="Interchain (with C-327)" evidence="2">
    <location>
        <position position="474"/>
    </location>
</feature>
<feature type="disulfide bond" evidence="2">
    <location>
        <begin position="488"/>
        <end position="552"/>
    </location>
</feature>
<feature type="disulfide bond" evidence="2">
    <location>
        <begin position="516"/>
        <end position="531"/>
    </location>
</feature>
<feature type="disulfide bond" evidence="2">
    <location>
        <begin position="542"/>
        <end position="571"/>
    </location>
</feature>
<gene>
    <name type="primary">Cfi</name>
    <name type="synonym">If</name>
</gene>
<reference key="1">
    <citation type="journal article" date="1999" name="Immunology">
        <title>Rat complement factor I: molecular cloning, sequencing and expression in tissues and isolated cells.</title>
        <authorList>
            <person name="Schlaf G."/>
            <person name="Rothermel E."/>
            <person name="Oppermann M."/>
            <person name="Schieferdecker H.L."/>
            <person name="Jungermann K."/>
            <person name="Gotze O."/>
        </authorList>
    </citation>
    <scope>NUCLEOTIDE SEQUENCE [MRNA]</scope>
    <source>
        <strain>Sprague-Dawley</strain>
        <tissue>Liver</tissue>
    </source>
</reference>
<reference key="2">
    <citation type="journal article" date="2004" name="Genome Res.">
        <title>The status, quality, and expansion of the NIH full-length cDNA project: the Mammalian Gene Collection (MGC).</title>
        <authorList>
            <consortium name="The MGC Project Team"/>
        </authorList>
    </citation>
    <scope>NUCLEOTIDE SEQUENCE [LARGE SCALE MRNA]</scope>
    <source>
        <tissue>Liver</tissue>
    </source>
</reference>
<dbReference type="EC" id="3.4.21.45"/>
<dbReference type="EMBL" id="Y18965">
    <property type="protein sequence ID" value="CAB41688.1"/>
    <property type="molecule type" value="mRNA"/>
</dbReference>
<dbReference type="EMBL" id="BC089798">
    <property type="protein sequence ID" value="AAH89798.1"/>
    <property type="molecule type" value="mRNA"/>
</dbReference>
<dbReference type="RefSeq" id="NP_077071.1">
    <property type="nucleotide sequence ID" value="NM_024157.1"/>
</dbReference>
<dbReference type="SMR" id="Q9WUW3"/>
<dbReference type="FunCoup" id="Q9WUW3">
    <property type="interactions" value="66"/>
</dbReference>
<dbReference type="STRING" id="10116.ENSRNOP00000071685"/>
<dbReference type="MEROPS" id="S01.199"/>
<dbReference type="GlyCosmos" id="Q9WUW3">
    <property type="glycosylation" value="6 sites, No reported glycans"/>
</dbReference>
<dbReference type="GlyGen" id="Q9WUW3">
    <property type="glycosylation" value="6 sites"/>
</dbReference>
<dbReference type="iPTMnet" id="Q9WUW3"/>
<dbReference type="PhosphoSitePlus" id="Q9WUW3"/>
<dbReference type="PaxDb" id="10116-ENSRNOP00000032881"/>
<dbReference type="GeneID" id="79126"/>
<dbReference type="KEGG" id="rno:79126"/>
<dbReference type="UCSC" id="RGD:620429">
    <property type="organism name" value="rat"/>
</dbReference>
<dbReference type="AGR" id="RGD:620429"/>
<dbReference type="CTD" id="3426"/>
<dbReference type="RGD" id="620429">
    <property type="gene designation" value="Cfi"/>
</dbReference>
<dbReference type="eggNOG" id="KOG3627">
    <property type="taxonomic scope" value="Eukaryota"/>
</dbReference>
<dbReference type="InParanoid" id="Q9WUW3"/>
<dbReference type="OrthoDB" id="19606at2759"/>
<dbReference type="PhylomeDB" id="Q9WUW3"/>
<dbReference type="Reactome" id="R-RNO-977606">
    <property type="pathway name" value="Regulation of Complement cascade"/>
</dbReference>
<dbReference type="PRO" id="PR:Q9WUW3"/>
<dbReference type="Proteomes" id="UP000002494">
    <property type="component" value="Unplaced"/>
</dbReference>
<dbReference type="GO" id="GO:0005615">
    <property type="term" value="C:extracellular space"/>
    <property type="evidence" value="ECO:0000314"/>
    <property type="project" value="RGD"/>
</dbReference>
<dbReference type="GO" id="GO:0016020">
    <property type="term" value="C:membrane"/>
    <property type="evidence" value="ECO:0007669"/>
    <property type="project" value="InterPro"/>
</dbReference>
<dbReference type="GO" id="GO:0046872">
    <property type="term" value="F:metal ion binding"/>
    <property type="evidence" value="ECO:0007669"/>
    <property type="project" value="UniProtKB-KW"/>
</dbReference>
<dbReference type="GO" id="GO:0004252">
    <property type="term" value="F:serine-type endopeptidase activity"/>
    <property type="evidence" value="ECO:0007669"/>
    <property type="project" value="UniProtKB-EC"/>
</dbReference>
<dbReference type="GO" id="GO:0071354">
    <property type="term" value="P:cellular response to interleukin-6"/>
    <property type="evidence" value="ECO:0000270"/>
    <property type="project" value="RGD"/>
</dbReference>
<dbReference type="GO" id="GO:0006956">
    <property type="term" value="P:complement activation"/>
    <property type="evidence" value="ECO:0000266"/>
    <property type="project" value="RGD"/>
</dbReference>
<dbReference type="GO" id="GO:0006958">
    <property type="term" value="P:complement activation, classical pathway"/>
    <property type="evidence" value="ECO:0007669"/>
    <property type="project" value="UniProtKB-KW"/>
</dbReference>
<dbReference type="GO" id="GO:0045087">
    <property type="term" value="P:innate immune response"/>
    <property type="evidence" value="ECO:0007669"/>
    <property type="project" value="UniProtKB-KW"/>
</dbReference>
<dbReference type="GO" id="GO:0006508">
    <property type="term" value="P:proteolysis"/>
    <property type="evidence" value="ECO:0007669"/>
    <property type="project" value="UniProtKB-KW"/>
</dbReference>
<dbReference type="CDD" id="cd00104">
    <property type="entry name" value="KAZAL_FS"/>
    <property type="match status" value="1"/>
</dbReference>
<dbReference type="CDD" id="cd00112">
    <property type="entry name" value="LDLa"/>
    <property type="match status" value="2"/>
</dbReference>
<dbReference type="CDD" id="cd00190">
    <property type="entry name" value="Tryp_SPc"/>
    <property type="match status" value="1"/>
</dbReference>
<dbReference type="FunFam" id="2.40.10.10:FF:000066">
    <property type="entry name" value="Complement factor I"/>
    <property type="match status" value="1"/>
</dbReference>
<dbReference type="FunFam" id="3.30.60.30:FF:000027">
    <property type="entry name" value="Complement factor I"/>
    <property type="match status" value="1"/>
</dbReference>
<dbReference type="FunFam" id="4.10.400.10:FF:000129">
    <property type="entry name" value="Complement factor I"/>
    <property type="match status" value="1"/>
</dbReference>
<dbReference type="FunFam" id="4.10.400.10:FF:000163">
    <property type="entry name" value="Complement factor I"/>
    <property type="match status" value="1"/>
</dbReference>
<dbReference type="Gene3D" id="3.30.60.30">
    <property type="match status" value="1"/>
</dbReference>
<dbReference type="Gene3D" id="4.10.400.10">
    <property type="entry name" value="Low-density Lipoprotein Receptor"/>
    <property type="match status" value="2"/>
</dbReference>
<dbReference type="Gene3D" id="3.10.250.10">
    <property type="entry name" value="SRCR-like domain"/>
    <property type="match status" value="1"/>
</dbReference>
<dbReference type="Gene3D" id="2.40.10.10">
    <property type="entry name" value="Trypsin-like serine proteases"/>
    <property type="match status" value="1"/>
</dbReference>
<dbReference type="InterPro" id="IPR048722">
    <property type="entry name" value="CFAI_FIMAC_N"/>
</dbReference>
<dbReference type="InterPro" id="IPR048719">
    <property type="entry name" value="CFAI_KAZAL"/>
</dbReference>
<dbReference type="InterPro" id="IPR003884">
    <property type="entry name" value="FacI_MAC"/>
</dbReference>
<dbReference type="InterPro" id="IPR002350">
    <property type="entry name" value="Kazal_dom"/>
</dbReference>
<dbReference type="InterPro" id="IPR036058">
    <property type="entry name" value="Kazal_dom_sf"/>
</dbReference>
<dbReference type="InterPro" id="IPR036055">
    <property type="entry name" value="LDL_receptor-like_sf"/>
</dbReference>
<dbReference type="InterPro" id="IPR023415">
    <property type="entry name" value="LDLR_class-A_CS"/>
</dbReference>
<dbReference type="InterPro" id="IPR002172">
    <property type="entry name" value="LDrepeatLR_classA_rpt"/>
</dbReference>
<dbReference type="InterPro" id="IPR009003">
    <property type="entry name" value="Peptidase_S1_PA"/>
</dbReference>
<dbReference type="InterPro" id="IPR043504">
    <property type="entry name" value="Peptidase_S1_PA_chymotrypsin"/>
</dbReference>
<dbReference type="InterPro" id="IPR001314">
    <property type="entry name" value="Peptidase_S1A"/>
</dbReference>
<dbReference type="InterPro" id="IPR001190">
    <property type="entry name" value="SRCR"/>
</dbReference>
<dbReference type="InterPro" id="IPR036772">
    <property type="entry name" value="SRCR-like_dom_sf"/>
</dbReference>
<dbReference type="InterPro" id="IPR001254">
    <property type="entry name" value="Trypsin_dom"/>
</dbReference>
<dbReference type="InterPro" id="IPR018114">
    <property type="entry name" value="TRYPSIN_HIS"/>
</dbReference>
<dbReference type="InterPro" id="IPR033116">
    <property type="entry name" value="TRYPSIN_SER"/>
</dbReference>
<dbReference type="PANTHER" id="PTHR24252">
    <property type="entry name" value="ACROSIN-RELATED"/>
    <property type="match status" value="1"/>
</dbReference>
<dbReference type="PANTHER" id="PTHR24252:SF17">
    <property type="entry name" value="SUPPRESSOR OF TUMORIGENICITY 14 PROTEIN HOMOLOG-RELATED"/>
    <property type="match status" value="1"/>
</dbReference>
<dbReference type="Pfam" id="PF21286">
    <property type="entry name" value="CFAI_FIMAC_N"/>
    <property type="match status" value="1"/>
</dbReference>
<dbReference type="Pfam" id="PF21287">
    <property type="entry name" value="Kazal_CFAI"/>
    <property type="match status" value="1"/>
</dbReference>
<dbReference type="Pfam" id="PF00057">
    <property type="entry name" value="Ldl_recept_a"/>
    <property type="match status" value="2"/>
</dbReference>
<dbReference type="Pfam" id="PF00530">
    <property type="entry name" value="SRCR"/>
    <property type="match status" value="1"/>
</dbReference>
<dbReference type="Pfam" id="PF00089">
    <property type="entry name" value="Trypsin"/>
    <property type="match status" value="1"/>
</dbReference>
<dbReference type="PRINTS" id="PR00722">
    <property type="entry name" value="CHYMOTRYPSIN"/>
</dbReference>
<dbReference type="SMART" id="SM00057">
    <property type="entry name" value="FIMAC"/>
    <property type="match status" value="1"/>
</dbReference>
<dbReference type="SMART" id="SM00280">
    <property type="entry name" value="KAZAL"/>
    <property type="match status" value="1"/>
</dbReference>
<dbReference type="SMART" id="SM00192">
    <property type="entry name" value="LDLa"/>
    <property type="match status" value="2"/>
</dbReference>
<dbReference type="SMART" id="SM00202">
    <property type="entry name" value="SR"/>
    <property type="match status" value="1"/>
</dbReference>
<dbReference type="SMART" id="SM00020">
    <property type="entry name" value="Tryp_SPc"/>
    <property type="match status" value="1"/>
</dbReference>
<dbReference type="SUPFAM" id="SSF100895">
    <property type="entry name" value="Kazal-type serine protease inhibitors"/>
    <property type="match status" value="1"/>
</dbReference>
<dbReference type="SUPFAM" id="SSF57424">
    <property type="entry name" value="LDL receptor-like module"/>
    <property type="match status" value="2"/>
</dbReference>
<dbReference type="SUPFAM" id="SSF56487">
    <property type="entry name" value="SRCR-like"/>
    <property type="match status" value="1"/>
</dbReference>
<dbReference type="SUPFAM" id="SSF50494">
    <property type="entry name" value="Trypsin-like serine proteases"/>
    <property type="match status" value="1"/>
</dbReference>
<dbReference type="PROSITE" id="PS51465">
    <property type="entry name" value="KAZAL_2"/>
    <property type="match status" value="1"/>
</dbReference>
<dbReference type="PROSITE" id="PS01209">
    <property type="entry name" value="LDLRA_1"/>
    <property type="match status" value="1"/>
</dbReference>
<dbReference type="PROSITE" id="PS50068">
    <property type="entry name" value="LDLRA_2"/>
    <property type="match status" value="2"/>
</dbReference>
<dbReference type="PROSITE" id="PS50287">
    <property type="entry name" value="SRCR_2"/>
    <property type="match status" value="1"/>
</dbReference>
<dbReference type="PROSITE" id="PS50240">
    <property type="entry name" value="TRYPSIN_DOM"/>
    <property type="match status" value="1"/>
</dbReference>
<dbReference type="PROSITE" id="PS00134">
    <property type="entry name" value="TRYPSIN_HIS"/>
    <property type="match status" value="1"/>
</dbReference>
<dbReference type="PROSITE" id="PS00135">
    <property type="entry name" value="TRYPSIN_SER"/>
    <property type="match status" value="1"/>
</dbReference>
<sequence length="604" mass="67298">MKLALLILLLLNPHLSSSKNTPASGQPQEDLVEQKCLLKNYTHHSCDKVFCQPWQKCIEGTCACKLPYQCPKAGTPVCATNGRGYPTYCHLKSFECLHPEIKFSNNGTCTAEEKFNVSLIYGSTDTEGIVQVKLVDQDEKMFICKNSWSTVEANVACFDLGFPLGVRDIQGRFNIPVNHKINSTECLHVRCQGVETSLAECTFTKKSSKAPHGLAGVVCYTQDADFPTSQSFQCVNGKRIPQEKACDGVNDCGDQSDELCCKGCRGQAFLCKSGVCIPNQRKCNGEVDCITGEDESGCEEDKKNKIHKGLARSDQGGETEIETEETEMLTPDMDTERKRIKSLLPKLSCGVKRNTHIRRKRVVGGKPAEMGDYPWQVAIKDGDRITCGGIYIGGCWILTAAHCVRPSRYRNYQVWTSLLDWLKPNSQLAVQGVSRVVVHEKYNGATYQNDIALVEMKKHPGKKECELINSVPACVPWSPYLFQPNDRCIISGWGREKDNQKVYSLRWGEVDLIGNCSRFYPGRYYEKEMQCAGTSDGSIDACKGDSGGPLVCKDVNNVTYVWGIVSWGENCGKPEFPGVYTRVASYFDWISYYVGRPLVSQYNV</sequence>
<proteinExistence type="evidence at transcript level"/>
<protein>
    <recommendedName>
        <fullName>Complement factor I</fullName>
        <ecNumber>3.4.21.45</ecNumber>
    </recommendedName>
    <alternativeName>
        <fullName>C3B/C4B inactivator</fullName>
    </alternativeName>
    <component>
        <recommendedName>
            <fullName>Complement factor I heavy chain</fullName>
        </recommendedName>
    </component>
    <component>
        <recommendedName>
            <fullName>Complement factor I light chain</fullName>
        </recommendedName>
    </component>
</protein>
<organism>
    <name type="scientific">Rattus norvegicus</name>
    <name type="common">Rat</name>
    <dbReference type="NCBI Taxonomy" id="10116"/>
    <lineage>
        <taxon>Eukaryota</taxon>
        <taxon>Metazoa</taxon>
        <taxon>Chordata</taxon>
        <taxon>Craniata</taxon>
        <taxon>Vertebrata</taxon>
        <taxon>Euteleostomi</taxon>
        <taxon>Mammalia</taxon>
        <taxon>Eutheria</taxon>
        <taxon>Euarchontoglires</taxon>
        <taxon>Glires</taxon>
        <taxon>Rodentia</taxon>
        <taxon>Myomorpha</taxon>
        <taxon>Muroidea</taxon>
        <taxon>Muridae</taxon>
        <taxon>Murinae</taxon>
        <taxon>Rattus</taxon>
    </lineage>
</organism>
<accession>Q9WUW3</accession>
<accession>Q5EBC4</accession>